<protein>
    <recommendedName>
        <fullName evidence="1">Sec-independent protein translocase protein TatA</fullName>
    </recommendedName>
</protein>
<proteinExistence type="inferred from homology"/>
<reference key="1">
    <citation type="journal article" date="1997" name="Nature">
        <title>The complete genome sequence of the gastric pathogen Helicobacter pylori.</title>
        <authorList>
            <person name="Tomb J.-F."/>
            <person name="White O."/>
            <person name="Kerlavage A.R."/>
            <person name="Clayton R.A."/>
            <person name="Sutton G.G."/>
            <person name="Fleischmann R.D."/>
            <person name="Ketchum K.A."/>
            <person name="Klenk H.-P."/>
            <person name="Gill S.R."/>
            <person name="Dougherty B.A."/>
            <person name="Nelson K.E."/>
            <person name="Quackenbush J."/>
            <person name="Zhou L."/>
            <person name="Kirkness E.F."/>
            <person name="Peterson S.N."/>
            <person name="Loftus B.J."/>
            <person name="Richardson D.L."/>
            <person name="Dodson R.J."/>
            <person name="Khalak H.G."/>
            <person name="Glodek A."/>
            <person name="McKenney K."/>
            <person name="FitzGerald L.M."/>
            <person name="Lee N."/>
            <person name="Adams M.D."/>
            <person name="Hickey E.K."/>
            <person name="Berg D.E."/>
            <person name="Gocayne J.D."/>
            <person name="Utterback T.R."/>
            <person name="Peterson J.D."/>
            <person name="Kelley J.M."/>
            <person name="Cotton M.D."/>
            <person name="Weidman J.F."/>
            <person name="Fujii C."/>
            <person name="Bowman C."/>
            <person name="Watthey L."/>
            <person name="Wallin E."/>
            <person name="Hayes W.S."/>
            <person name="Borodovsky M."/>
            <person name="Karp P.D."/>
            <person name="Smith H.O."/>
            <person name="Fraser C.M."/>
            <person name="Venter J.C."/>
        </authorList>
    </citation>
    <scope>NUCLEOTIDE SEQUENCE [LARGE SCALE GENOMIC DNA]</scope>
    <source>
        <strain>ATCC 700392 / 26695</strain>
    </source>
</reference>
<sequence length="79" mass="8722">MGGFTSIWHWVIVLLVIVLLFGAKKIPELAKGLGSGIKNFKKAVKDDEEEAKNEPKTLDAQATQTKVHESSEIKSKQES</sequence>
<keyword id="KW-0997">Cell inner membrane</keyword>
<keyword id="KW-1003">Cell membrane</keyword>
<keyword id="KW-0472">Membrane</keyword>
<keyword id="KW-0653">Protein transport</keyword>
<keyword id="KW-1185">Reference proteome</keyword>
<keyword id="KW-0811">Translocation</keyword>
<keyword id="KW-0812">Transmembrane</keyword>
<keyword id="KW-1133">Transmembrane helix</keyword>
<keyword id="KW-0813">Transport</keyword>
<accession>O25088</accession>
<name>TATA_HELPY</name>
<organism>
    <name type="scientific">Helicobacter pylori (strain ATCC 700392 / 26695)</name>
    <name type="common">Campylobacter pylori</name>
    <dbReference type="NCBI Taxonomy" id="85962"/>
    <lineage>
        <taxon>Bacteria</taxon>
        <taxon>Pseudomonadati</taxon>
        <taxon>Campylobacterota</taxon>
        <taxon>Epsilonproteobacteria</taxon>
        <taxon>Campylobacterales</taxon>
        <taxon>Helicobacteraceae</taxon>
        <taxon>Helicobacter</taxon>
    </lineage>
</organism>
<comment type="function">
    <text evidence="1">Part of the twin-arginine translocation (Tat) system that transports large folded proteins containing a characteristic twin-arginine motif in their signal peptide across membranes. TatA could form the protein-conducting channel of the Tat system.</text>
</comment>
<comment type="subunit">
    <text evidence="1">The Tat system comprises two distinct complexes: a TatABC complex, containing multiple copies of TatA, TatB and TatC subunits, and a separate TatA complex, containing only TatA subunits. Substrates initially bind to the TatABC complex, which probably triggers association of the separate TatA complex to form the active translocon.</text>
</comment>
<comment type="subcellular location">
    <subcellularLocation>
        <location evidence="1">Cell inner membrane</location>
        <topology evidence="1">Single-pass membrane protein</topology>
    </subcellularLocation>
</comment>
<comment type="similarity">
    <text evidence="1">Belongs to the TatA/E family.</text>
</comment>
<evidence type="ECO:0000255" key="1">
    <source>
        <dbReference type="HAMAP-Rule" id="MF_00236"/>
    </source>
</evidence>
<evidence type="ECO:0000256" key="2">
    <source>
        <dbReference type="SAM" id="MobiDB-lite"/>
    </source>
</evidence>
<feature type="chain" id="PRO_0000097939" description="Sec-independent protein translocase protein TatA">
    <location>
        <begin position="1"/>
        <end position="79"/>
    </location>
</feature>
<feature type="transmembrane region" description="Helical" evidence="1">
    <location>
        <begin position="1"/>
        <end position="21"/>
    </location>
</feature>
<feature type="region of interest" description="Disordered" evidence="2">
    <location>
        <begin position="48"/>
        <end position="79"/>
    </location>
</feature>
<feature type="compositionally biased region" description="Basic and acidic residues" evidence="2">
    <location>
        <begin position="66"/>
        <end position="79"/>
    </location>
</feature>
<gene>
    <name evidence="1" type="primary">tatA</name>
    <name type="ordered locus">HP_0320</name>
</gene>
<dbReference type="EMBL" id="AE000511">
    <property type="protein sequence ID" value="AAD07397.1"/>
    <property type="molecule type" value="Genomic_DNA"/>
</dbReference>
<dbReference type="PIR" id="H64559">
    <property type="entry name" value="H64559"/>
</dbReference>
<dbReference type="RefSeq" id="NP_207118.1">
    <property type="nucleotide sequence ID" value="NC_000915.1"/>
</dbReference>
<dbReference type="RefSeq" id="WP_000508588.1">
    <property type="nucleotide sequence ID" value="NC_018939.1"/>
</dbReference>
<dbReference type="SMR" id="O25088"/>
<dbReference type="FunCoup" id="O25088">
    <property type="interactions" value="343"/>
</dbReference>
<dbReference type="IntAct" id="O25088">
    <property type="interactions" value="1"/>
</dbReference>
<dbReference type="STRING" id="85962.HP_0320"/>
<dbReference type="PaxDb" id="85962-C694_01620"/>
<dbReference type="EnsemblBacteria" id="AAD07397">
    <property type="protein sequence ID" value="AAD07397"/>
    <property type="gene ID" value="HP_0320"/>
</dbReference>
<dbReference type="KEGG" id="heo:C694_01620"/>
<dbReference type="KEGG" id="hpy:HP_0320"/>
<dbReference type="PATRIC" id="fig|85962.47.peg.342"/>
<dbReference type="eggNOG" id="COG1826">
    <property type="taxonomic scope" value="Bacteria"/>
</dbReference>
<dbReference type="InParanoid" id="O25088"/>
<dbReference type="Proteomes" id="UP000000429">
    <property type="component" value="Chromosome"/>
</dbReference>
<dbReference type="GO" id="GO:0033281">
    <property type="term" value="C:TAT protein transport complex"/>
    <property type="evidence" value="ECO:0007669"/>
    <property type="project" value="UniProtKB-UniRule"/>
</dbReference>
<dbReference type="GO" id="GO:0008320">
    <property type="term" value="F:protein transmembrane transporter activity"/>
    <property type="evidence" value="ECO:0007669"/>
    <property type="project" value="UniProtKB-UniRule"/>
</dbReference>
<dbReference type="GO" id="GO:0043953">
    <property type="term" value="P:protein transport by the Tat complex"/>
    <property type="evidence" value="ECO:0007669"/>
    <property type="project" value="UniProtKB-UniRule"/>
</dbReference>
<dbReference type="Gene3D" id="1.20.5.3310">
    <property type="match status" value="1"/>
</dbReference>
<dbReference type="HAMAP" id="MF_00236">
    <property type="entry name" value="TatA_E"/>
    <property type="match status" value="1"/>
</dbReference>
<dbReference type="InterPro" id="IPR003369">
    <property type="entry name" value="TatA/B/E"/>
</dbReference>
<dbReference type="InterPro" id="IPR006312">
    <property type="entry name" value="TatA/E"/>
</dbReference>
<dbReference type="NCBIfam" id="TIGR01411">
    <property type="entry name" value="tatAE"/>
    <property type="match status" value="1"/>
</dbReference>
<dbReference type="PANTHER" id="PTHR42982">
    <property type="entry name" value="SEC-INDEPENDENT PROTEIN TRANSLOCASE PROTEIN TATA"/>
    <property type="match status" value="1"/>
</dbReference>
<dbReference type="PANTHER" id="PTHR42982:SF1">
    <property type="entry name" value="SEC-INDEPENDENT PROTEIN TRANSLOCASE PROTEIN TATA"/>
    <property type="match status" value="1"/>
</dbReference>
<dbReference type="Pfam" id="PF02416">
    <property type="entry name" value="TatA_B_E"/>
    <property type="match status" value="1"/>
</dbReference>